<accession>A9QZK6</accession>
<evidence type="ECO:0000255" key="1">
    <source>
        <dbReference type="HAMAP-Rule" id="MF_00333"/>
    </source>
</evidence>
<protein>
    <recommendedName>
        <fullName evidence="1">Oxygen-dependent coproporphyrinogen-III oxidase</fullName>
        <shortName evidence="1">CPO</shortName>
        <shortName evidence="1">Coprogen oxidase</shortName>
        <shortName evidence="1">Coproporphyrinogenase</shortName>
        <ecNumber evidence="1">1.3.3.3</ecNumber>
    </recommendedName>
</protein>
<feature type="chain" id="PRO_1000119837" description="Oxygen-dependent coproporphyrinogen-III oxidase">
    <location>
        <begin position="1"/>
        <end position="309"/>
    </location>
</feature>
<feature type="region of interest" description="Important for dimerization" evidence="1">
    <location>
        <begin position="242"/>
        <end position="277"/>
    </location>
</feature>
<feature type="active site" description="Proton donor" evidence="1">
    <location>
        <position position="108"/>
    </location>
</feature>
<feature type="binding site" evidence="1">
    <location>
        <position position="94"/>
    </location>
    <ligand>
        <name>substrate</name>
    </ligand>
</feature>
<feature type="binding site" evidence="1">
    <location>
        <position position="98"/>
    </location>
    <ligand>
        <name>a divalent metal cation</name>
        <dbReference type="ChEBI" id="CHEBI:60240"/>
    </ligand>
</feature>
<feature type="binding site" evidence="1">
    <location>
        <position position="108"/>
    </location>
    <ligand>
        <name>a divalent metal cation</name>
        <dbReference type="ChEBI" id="CHEBI:60240"/>
    </ligand>
</feature>
<feature type="binding site" evidence="1">
    <location>
        <begin position="110"/>
        <end position="112"/>
    </location>
    <ligand>
        <name>substrate</name>
    </ligand>
</feature>
<feature type="binding site" evidence="1">
    <location>
        <position position="147"/>
    </location>
    <ligand>
        <name>a divalent metal cation</name>
        <dbReference type="ChEBI" id="CHEBI:60240"/>
    </ligand>
</feature>
<feature type="binding site" evidence="1">
    <location>
        <position position="177"/>
    </location>
    <ligand>
        <name>a divalent metal cation</name>
        <dbReference type="ChEBI" id="CHEBI:60240"/>
    </ligand>
</feature>
<feature type="binding site" evidence="1">
    <location>
        <begin position="260"/>
        <end position="262"/>
    </location>
    <ligand>
        <name>substrate</name>
    </ligand>
</feature>
<feature type="site" description="Important for dimerization" evidence="1">
    <location>
        <position position="177"/>
    </location>
</feature>
<gene>
    <name evidence="1" type="primary">hemF</name>
    <name type="ordered locus">YpAngola_A2784</name>
</gene>
<sequence>MNSPDIALIKTYLLTLQDNICAALAQADGHAEFTEECWVREEGGGGRSRVLVNGAVFEQAGVNFSHVSGAMLPASATAHRPELAGRSFQALGVSLVIHPLNPYLPTSHANVRFFIAEKPGEDAVWWFGGGFDLTPYYGFEEDAIHWHQVAHSLCQPFGEQIYPRYKKWCDDYFYIKHRQEARGIGGLFFDDLNSPDFMTCFNFTQAVGDGFLAAYMPIVARRKALGWGDRERQFQLYRRGRYVEFNLVWDRGTLFGLQTGGRTESILMSLPPLVRWEYNYQPEADSAEAALYRDFLPVKDWLAIKGETH</sequence>
<comment type="function">
    <text evidence="1">Involved in the heme biosynthesis. Catalyzes the aerobic oxidative decarboxylation of propionate groups of rings A and B of coproporphyrinogen-III to yield the vinyl groups in protoporphyrinogen-IX.</text>
</comment>
<comment type="catalytic activity">
    <reaction evidence="1">
        <text>coproporphyrinogen III + O2 + 2 H(+) = protoporphyrinogen IX + 2 CO2 + 2 H2O</text>
        <dbReference type="Rhea" id="RHEA:18257"/>
        <dbReference type="ChEBI" id="CHEBI:15377"/>
        <dbReference type="ChEBI" id="CHEBI:15378"/>
        <dbReference type="ChEBI" id="CHEBI:15379"/>
        <dbReference type="ChEBI" id="CHEBI:16526"/>
        <dbReference type="ChEBI" id="CHEBI:57307"/>
        <dbReference type="ChEBI" id="CHEBI:57309"/>
        <dbReference type="EC" id="1.3.3.3"/>
    </reaction>
</comment>
<comment type="cofactor">
    <cofactor evidence="1">
        <name>a divalent metal cation</name>
        <dbReference type="ChEBI" id="CHEBI:60240"/>
    </cofactor>
</comment>
<comment type="pathway">
    <text evidence="1">Porphyrin-containing compound metabolism; protoporphyrin-IX biosynthesis; protoporphyrinogen-IX from coproporphyrinogen-III (O2 route): step 1/1.</text>
</comment>
<comment type="subunit">
    <text evidence="1">Homodimer.</text>
</comment>
<comment type="subcellular location">
    <subcellularLocation>
        <location evidence="1">Cytoplasm</location>
    </subcellularLocation>
</comment>
<comment type="similarity">
    <text evidence="1">Belongs to the aerobic coproporphyrinogen-III oxidase family.</text>
</comment>
<reference key="1">
    <citation type="journal article" date="2010" name="J. Bacteriol.">
        <title>Genome sequence of the deep-rooted Yersinia pestis strain Angola reveals new insights into the evolution and pangenome of the plague bacterium.</title>
        <authorList>
            <person name="Eppinger M."/>
            <person name="Worsham P.L."/>
            <person name="Nikolich M.P."/>
            <person name="Riley D.R."/>
            <person name="Sebastian Y."/>
            <person name="Mou S."/>
            <person name="Achtman M."/>
            <person name="Lindler L.E."/>
            <person name="Ravel J."/>
        </authorList>
    </citation>
    <scope>NUCLEOTIDE SEQUENCE [LARGE SCALE GENOMIC DNA]</scope>
    <source>
        <strain>Angola</strain>
    </source>
</reference>
<proteinExistence type="inferred from homology"/>
<organism>
    <name type="scientific">Yersinia pestis bv. Antiqua (strain Angola)</name>
    <dbReference type="NCBI Taxonomy" id="349746"/>
    <lineage>
        <taxon>Bacteria</taxon>
        <taxon>Pseudomonadati</taxon>
        <taxon>Pseudomonadota</taxon>
        <taxon>Gammaproteobacteria</taxon>
        <taxon>Enterobacterales</taxon>
        <taxon>Yersiniaceae</taxon>
        <taxon>Yersinia</taxon>
    </lineage>
</organism>
<dbReference type="EC" id="1.3.3.3" evidence="1"/>
<dbReference type="EMBL" id="CP000901">
    <property type="protein sequence ID" value="ABX85895.1"/>
    <property type="molecule type" value="Genomic_DNA"/>
</dbReference>
<dbReference type="RefSeq" id="WP_002208526.1">
    <property type="nucleotide sequence ID" value="NZ_CP009935.1"/>
</dbReference>
<dbReference type="SMR" id="A9QZK6"/>
<dbReference type="GeneID" id="57975670"/>
<dbReference type="KEGG" id="ypg:YpAngola_A2784"/>
<dbReference type="PATRIC" id="fig|349746.12.peg.3818"/>
<dbReference type="UniPathway" id="UPA00251">
    <property type="reaction ID" value="UER00322"/>
</dbReference>
<dbReference type="GO" id="GO:0005737">
    <property type="term" value="C:cytoplasm"/>
    <property type="evidence" value="ECO:0007669"/>
    <property type="project" value="UniProtKB-SubCell"/>
</dbReference>
<dbReference type="GO" id="GO:0004109">
    <property type="term" value="F:coproporphyrinogen oxidase activity"/>
    <property type="evidence" value="ECO:0007669"/>
    <property type="project" value="UniProtKB-UniRule"/>
</dbReference>
<dbReference type="GO" id="GO:0046872">
    <property type="term" value="F:metal ion binding"/>
    <property type="evidence" value="ECO:0007669"/>
    <property type="project" value="UniProtKB-KW"/>
</dbReference>
<dbReference type="GO" id="GO:0042803">
    <property type="term" value="F:protein homodimerization activity"/>
    <property type="evidence" value="ECO:0000250"/>
    <property type="project" value="UniProtKB"/>
</dbReference>
<dbReference type="GO" id="GO:0006782">
    <property type="term" value="P:protoporphyrinogen IX biosynthetic process"/>
    <property type="evidence" value="ECO:0007669"/>
    <property type="project" value="UniProtKB-UniRule"/>
</dbReference>
<dbReference type="FunFam" id="3.40.1500.10:FF:000001">
    <property type="entry name" value="Oxygen-dependent coproporphyrinogen-III oxidase"/>
    <property type="match status" value="1"/>
</dbReference>
<dbReference type="Gene3D" id="3.40.1500.10">
    <property type="entry name" value="Coproporphyrinogen III oxidase, aerobic"/>
    <property type="match status" value="1"/>
</dbReference>
<dbReference type="HAMAP" id="MF_00333">
    <property type="entry name" value="Coprogen_oxidas"/>
    <property type="match status" value="1"/>
</dbReference>
<dbReference type="InterPro" id="IPR001260">
    <property type="entry name" value="Coprogen_oxidase_aer"/>
</dbReference>
<dbReference type="InterPro" id="IPR036406">
    <property type="entry name" value="Coprogen_oxidase_aer_sf"/>
</dbReference>
<dbReference type="InterPro" id="IPR018375">
    <property type="entry name" value="Coprogen_oxidase_CS"/>
</dbReference>
<dbReference type="NCBIfam" id="NF003727">
    <property type="entry name" value="PRK05330.1"/>
    <property type="match status" value="1"/>
</dbReference>
<dbReference type="PANTHER" id="PTHR10755">
    <property type="entry name" value="COPROPORPHYRINOGEN III OXIDASE, MITOCHONDRIAL"/>
    <property type="match status" value="1"/>
</dbReference>
<dbReference type="PANTHER" id="PTHR10755:SF0">
    <property type="entry name" value="OXYGEN-DEPENDENT COPROPORPHYRINOGEN-III OXIDASE, MITOCHONDRIAL"/>
    <property type="match status" value="1"/>
</dbReference>
<dbReference type="Pfam" id="PF01218">
    <property type="entry name" value="Coprogen_oxidas"/>
    <property type="match status" value="1"/>
</dbReference>
<dbReference type="PIRSF" id="PIRSF000166">
    <property type="entry name" value="Coproporphyri_ox"/>
    <property type="match status" value="1"/>
</dbReference>
<dbReference type="PRINTS" id="PR00073">
    <property type="entry name" value="COPRGNOXDASE"/>
</dbReference>
<dbReference type="SUPFAM" id="SSF102886">
    <property type="entry name" value="Coproporphyrinogen III oxidase"/>
    <property type="match status" value="1"/>
</dbReference>
<dbReference type="PROSITE" id="PS01021">
    <property type="entry name" value="COPROGEN_OXIDASE"/>
    <property type="match status" value="1"/>
</dbReference>
<name>HEM6_YERPG</name>
<keyword id="KW-0963">Cytoplasm</keyword>
<keyword id="KW-0350">Heme biosynthesis</keyword>
<keyword id="KW-0479">Metal-binding</keyword>
<keyword id="KW-0560">Oxidoreductase</keyword>
<keyword id="KW-0627">Porphyrin biosynthesis</keyword>